<organism>
    <name type="scientific">Rattus norvegicus</name>
    <name type="common">Rat</name>
    <dbReference type="NCBI Taxonomy" id="10116"/>
    <lineage>
        <taxon>Eukaryota</taxon>
        <taxon>Metazoa</taxon>
        <taxon>Chordata</taxon>
        <taxon>Craniata</taxon>
        <taxon>Vertebrata</taxon>
        <taxon>Euteleostomi</taxon>
        <taxon>Mammalia</taxon>
        <taxon>Eutheria</taxon>
        <taxon>Euarchontoglires</taxon>
        <taxon>Glires</taxon>
        <taxon>Rodentia</taxon>
        <taxon>Myomorpha</taxon>
        <taxon>Muroidea</taxon>
        <taxon>Muridae</taxon>
        <taxon>Murinae</taxon>
        <taxon>Rattus</taxon>
    </lineage>
</organism>
<keyword id="KW-0325">Glycoprotein</keyword>
<keyword id="KW-0407">Ion channel</keyword>
<keyword id="KW-0406">Ion transport</keyword>
<keyword id="KW-0472">Membrane</keyword>
<keyword id="KW-1185">Reference proteome</keyword>
<keyword id="KW-0812">Transmembrane</keyword>
<keyword id="KW-1133">Transmembrane helix</keyword>
<keyword id="KW-0813">Transport</keyword>
<gene>
    <name type="primary">Kcnmb2</name>
</gene>
<accession>Q811Q0</accession>
<accession>Q8CF83</accession>
<evidence type="ECO:0000250" key="1"/>
<evidence type="ECO:0000255" key="2"/>
<evidence type="ECO:0000269" key="3">
    <source>
    </source>
</evidence>
<evidence type="ECO:0000305" key="4"/>
<dbReference type="EMBL" id="AY191836">
    <property type="protein sequence ID" value="AAO43501.1"/>
    <property type="molecule type" value="mRNA"/>
</dbReference>
<dbReference type="EMBL" id="AJ517198">
    <property type="protein sequence ID" value="CAD56888.1"/>
    <property type="molecule type" value="mRNA"/>
</dbReference>
<dbReference type="RefSeq" id="NP_789831.1">
    <property type="nucleotide sequence ID" value="NM_176861.1"/>
</dbReference>
<dbReference type="BMRB" id="Q811Q0"/>
<dbReference type="SMR" id="Q811Q0"/>
<dbReference type="FunCoup" id="Q811Q0">
    <property type="interactions" value="13"/>
</dbReference>
<dbReference type="STRING" id="10116.ENSRNOP00000071367"/>
<dbReference type="GlyCosmos" id="Q811Q0">
    <property type="glycosylation" value="3 sites, No reported glycans"/>
</dbReference>
<dbReference type="GlyGen" id="Q811Q0">
    <property type="glycosylation" value="3 sites"/>
</dbReference>
<dbReference type="PhosphoSitePlus" id="Q811Q0"/>
<dbReference type="PaxDb" id="10116-ENSRNOP00000013410"/>
<dbReference type="ABCD" id="Q811Q0">
    <property type="antibodies" value="1 sequenced antibody"/>
</dbReference>
<dbReference type="GeneID" id="294961"/>
<dbReference type="KEGG" id="rno:294961"/>
<dbReference type="UCSC" id="RGD:631398">
    <property type="organism name" value="rat"/>
</dbReference>
<dbReference type="AGR" id="RGD:631398"/>
<dbReference type="CTD" id="10242"/>
<dbReference type="RGD" id="631398">
    <property type="gene designation" value="Kcnmb2"/>
</dbReference>
<dbReference type="eggNOG" id="ENOG502QSCP">
    <property type="taxonomic scope" value="Eukaryota"/>
</dbReference>
<dbReference type="InParanoid" id="Q811Q0"/>
<dbReference type="OrthoDB" id="5962477at2759"/>
<dbReference type="PhylomeDB" id="Q811Q0"/>
<dbReference type="Reactome" id="R-RNO-1296052">
    <property type="pathway name" value="Ca2+ activated K+ channels"/>
</dbReference>
<dbReference type="PRO" id="PR:Q811Q0"/>
<dbReference type="Proteomes" id="UP000002494">
    <property type="component" value="Unplaced"/>
</dbReference>
<dbReference type="GO" id="GO:0005886">
    <property type="term" value="C:plasma membrane"/>
    <property type="evidence" value="ECO:0000266"/>
    <property type="project" value="RGD"/>
</dbReference>
<dbReference type="GO" id="GO:0008076">
    <property type="term" value="C:voltage-gated potassium channel complex"/>
    <property type="evidence" value="ECO:0000266"/>
    <property type="project" value="RGD"/>
</dbReference>
<dbReference type="GO" id="GO:0015269">
    <property type="term" value="F:calcium-activated potassium channel activity"/>
    <property type="evidence" value="ECO:0000266"/>
    <property type="project" value="RGD"/>
</dbReference>
<dbReference type="GO" id="GO:0005267">
    <property type="term" value="F:potassium channel activity"/>
    <property type="evidence" value="ECO:0000314"/>
    <property type="project" value="RGD"/>
</dbReference>
<dbReference type="GO" id="GO:0015459">
    <property type="term" value="F:potassium channel regulator activity"/>
    <property type="evidence" value="ECO:0000318"/>
    <property type="project" value="GO_Central"/>
</dbReference>
<dbReference type="GO" id="GO:0001508">
    <property type="term" value="P:action potential"/>
    <property type="evidence" value="ECO:0000266"/>
    <property type="project" value="RGD"/>
</dbReference>
<dbReference type="GO" id="GO:0005513">
    <property type="term" value="P:detection of calcium ion"/>
    <property type="evidence" value="ECO:0000266"/>
    <property type="project" value="RGD"/>
</dbReference>
<dbReference type="GO" id="GO:0019228">
    <property type="term" value="P:neuronal action potential"/>
    <property type="evidence" value="ECO:0000266"/>
    <property type="project" value="RGD"/>
</dbReference>
<dbReference type="GO" id="GO:0006813">
    <property type="term" value="P:potassium ion transport"/>
    <property type="evidence" value="ECO:0000266"/>
    <property type="project" value="RGD"/>
</dbReference>
<dbReference type="FunFam" id="4.10.81.20:FF:000001">
    <property type="entry name" value="Calcium-activated potassium channel beta 2 subunit"/>
    <property type="match status" value="1"/>
</dbReference>
<dbReference type="Gene3D" id="4.10.81.20">
    <property type="entry name" value="KCNMB2, ball/chain domain"/>
    <property type="match status" value="1"/>
</dbReference>
<dbReference type="InterPro" id="IPR003930">
    <property type="entry name" value="K_chnl_Ca-activ_BK_bsu"/>
</dbReference>
<dbReference type="InterPro" id="IPR037096">
    <property type="entry name" value="KCNMB2_ball/chain_dom_sf"/>
</dbReference>
<dbReference type="InterPro" id="IPR015382">
    <property type="entry name" value="KCNMB2_ball_chain_dom"/>
</dbReference>
<dbReference type="PANTHER" id="PTHR10258">
    <property type="entry name" value="CALCIUM-ACTIVATED POTASSIUM CHANNEL SUBUNIT BETA"/>
    <property type="match status" value="1"/>
</dbReference>
<dbReference type="PANTHER" id="PTHR10258:SF5">
    <property type="entry name" value="CALCIUM-ACTIVATED POTASSIUM CHANNEL SUBUNIT BETA-2"/>
    <property type="match status" value="1"/>
</dbReference>
<dbReference type="Pfam" id="PF03185">
    <property type="entry name" value="CaKB"/>
    <property type="match status" value="1"/>
</dbReference>
<dbReference type="Pfam" id="PF09303">
    <property type="entry name" value="KcnmB2_inactiv"/>
    <property type="match status" value="1"/>
</dbReference>
<dbReference type="PRINTS" id="PR01450">
    <property type="entry name" value="BKCHANNELB"/>
</dbReference>
<comment type="function">
    <text evidence="1">Regulatory subunit of the calcium activated potassium KCNMA1 (maxiK) channel. Modulates the calcium sensitivity and gating kinetics of KCNMA1, thereby contributing to KCNMA1 channel diversity. Acts as a negative regulator that confers rapid and complete inactivation of KCNMA1 channel complex (By similarity).</text>
</comment>
<comment type="subunit">
    <text evidence="1">Interacts with KCNMA1 tetramer. There are probably 4 molecules of KCMNB2 per KCNMA1 tetramer (By similarity).</text>
</comment>
<comment type="subcellular location">
    <subcellularLocation>
        <location evidence="1">Membrane</location>
        <topology evidence="1">Multi-pass membrane protein</topology>
    </subcellularLocation>
</comment>
<comment type="tissue specificity">
    <text evidence="3">Highly expressed in brain and heart. Also expressed in lung.</text>
</comment>
<comment type="domain">
    <text evidence="1">The ball and chain domain mediates the inactivation of KCNMA1. It occludes the conduction pathway of KCNMA1 channels, and comprises the pore-blocking ball domain (residues 1-17) and the chain domain (residues 20-45) linking it to the transmembrane segment. The ball domain is made up of a flexible N-terminus anchored at a well ordered loop-helix motif. The chain domain consists of a 4-turn helix with an unfolded linker at its C-terminus (By similarity).</text>
</comment>
<comment type="PTM">
    <text evidence="1">N-glycosylated.</text>
</comment>
<comment type="similarity">
    <text evidence="4">Belongs to the KCNMB (TC 8.A.14.1) family. KCNMB2 subfamily.</text>
</comment>
<protein>
    <recommendedName>
        <fullName>Calcium-activated potassium channel subunit beta-2</fullName>
    </recommendedName>
    <alternativeName>
        <fullName>BK channel subunit beta-2</fullName>
        <shortName>BKbeta2</shortName>
    </alternativeName>
    <alternativeName>
        <fullName>Calcium-activated potassium channel, subfamily M subunit beta-2</fullName>
    </alternativeName>
    <alternativeName>
        <fullName>Charybdotoxin receptor subunit beta-2</fullName>
    </alternativeName>
    <alternativeName>
        <fullName>K(VCA)beta-2</fullName>
    </alternativeName>
    <alternativeName>
        <fullName>Maxi K channel subunit beta-2</fullName>
    </alternativeName>
    <alternativeName>
        <fullName>Rbeta3</fullName>
    </alternativeName>
    <alternativeName>
        <fullName>Slo-beta-2</fullName>
    </alternativeName>
</protein>
<proteinExistence type="evidence at transcript level"/>
<name>KCMB2_RAT</name>
<reference key="1">
    <citation type="submission" date="2002-12" db="EMBL/GenBank/DDBJ databases">
        <title>Rat inactivating beta 2 subunit of large conductance Ca2+-activated K+ channel (KCNMB2, rSlo beta 2 subunit).</title>
        <authorList>
            <person name="Eghbali M."/>
            <person name="Foroughi S."/>
            <person name="Toro L."/>
            <person name="Stefani E."/>
        </authorList>
    </citation>
    <scope>NUCLEOTIDE SEQUENCE [MRNA]</scope>
    <source>
        <strain>Sprague-Dawley</strain>
        <tissue>Heart</tissue>
    </source>
</reference>
<reference key="2">
    <citation type="journal article" date="2003" name="J. Comp. Neurol.">
        <title>Expression of a Ca2+-activated BK channel mRNA and its splice variants in the rat cochlea.</title>
        <authorList>
            <person name="Langer P."/>
            <person name="Gruender S."/>
            <person name="Ruesch A."/>
        </authorList>
    </citation>
    <scope>NUCLEOTIDE SEQUENCE [MRNA] OF 40-201</scope>
    <source>
        <strain>Wistar</strain>
        <tissue>Brain</tissue>
    </source>
</reference>
<reference key="3">
    <citation type="journal article" date="1999" name="J. Neurosci.">
        <title>Molecular basis for the inactivation of Ca2+- and voltage-dependent BK channels in adrenal chromaffin cells and rat insulinoma tumor cells.</title>
        <authorList>
            <person name="Xia X.-M."/>
            <person name="Ding J.-P."/>
            <person name="Lingle C.J."/>
        </authorList>
    </citation>
    <scope>TISSUE SPECIFICITY</scope>
</reference>
<sequence>MFIWTSGRTSSSYRHDEKRNIYQKIRDHDLLDKRKTVTALKAGEDRAILLGLAMMVCSIMMYFLLGITLLRSYMQSVWTEEAQRALLNVSITETFNCSFSCGPDCWKLSQYPCLQVYVNLTSSGEKLLLYHTEETMKINQKCSYIPKCGNNFEESMSLVSVVMENFRRHQHFPCYSDPEGNQKSVILTKLYSSNVLFHSLFWPTCMMAGGVAIVAMVKLTQYLSLLCERIQRINR</sequence>
<feature type="chain" id="PRO_0000187053" description="Calcium-activated potassium channel subunit beta-2">
    <location>
        <begin position="1"/>
        <end position="235"/>
    </location>
</feature>
<feature type="topological domain" description="Cytoplasmic" evidence="2">
    <location>
        <begin position="1"/>
        <end position="46"/>
    </location>
</feature>
<feature type="transmembrane region" description="Helical; Name=1" evidence="2">
    <location>
        <begin position="47"/>
        <end position="67"/>
    </location>
</feature>
<feature type="topological domain" description="Extracellular" evidence="2">
    <location>
        <begin position="68"/>
        <end position="194"/>
    </location>
</feature>
<feature type="transmembrane region" description="Helical; Name=2" evidence="2">
    <location>
        <begin position="195"/>
        <end position="215"/>
    </location>
</feature>
<feature type="topological domain" description="Cytoplasmic" evidence="2">
    <location>
        <begin position="216"/>
        <end position="235"/>
    </location>
</feature>
<feature type="region of interest" description="Ball and chain">
    <location>
        <begin position="1"/>
        <end position="45"/>
    </location>
</feature>
<feature type="glycosylation site" description="N-linked (GlcNAc...) asparagine" evidence="2">
    <location>
        <position position="88"/>
    </location>
</feature>
<feature type="glycosylation site" description="N-linked (GlcNAc...) asparagine" evidence="2">
    <location>
        <position position="96"/>
    </location>
</feature>
<feature type="glycosylation site" description="N-linked (GlcNAc...) asparagine" evidence="2">
    <location>
        <position position="119"/>
    </location>
</feature>
<feature type="sequence conflict" description="In Ref. 2; CAD56888." evidence="4" ref="2">
    <original>R</original>
    <variation>C</variation>
    <location>
        <position position="84"/>
    </location>
</feature>